<evidence type="ECO:0000255" key="1"/>
<evidence type="ECO:0000269" key="2">
    <source>
    </source>
</evidence>
<evidence type="ECO:0000303" key="3">
    <source>
    </source>
</evidence>
<evidence type="ECO:0000303" key="4">
    <source>
    </source>
</evidence>
<evidence type="ECO:0000305" key="5"/>
<evidence type="ECO:0000305" key="6">
    <source>
    </source>
</evidence>
<evidence type="ECO:0000305" key="7">
    <source>
    </source>
</evidence>
<evidence type="ECO:0000312" key="8">
    <source>
        <dbReference type="EMBL" id="QNC69665.1"/>
    </source>
</evidence>
<evidence type="ECO:0007744" key="9">
    <source>
        <dbReference type="PDB" id="7T9Q"/>
    </source>
</evidence>
<evidence type="ECO:0007744" key="10">
    <source>
        <dbReference type="PDB" id="7T9R"/>
    </source>
</evidence>
<evidence type="ECO:0007829" key="11">
    <source>
        <dbReference type="PDB" id="7T9R"/>
    </source>
</evidence>
<dbReference type="EMBL" id="MT452613">
    <property type="protein sequence ID" value="QNC69665.1"/>
    <property type="molecule type" value="Genomic_DNA"/>
</dbReference>
<dbReference type="PDB" id="7T9Q">
    <property type="method" value="X-ray"/>
    <property type="resolution" value="1.80 A"/>
    <property type="chains" value="A=24-61"/>
</dbReference>
<dbReference type="PDB" id="7T9R">
    <property type="method" value="X-ray"/>
    <property type="resolution" value="1.45 A"/>
    <property type="chains" value="A/B/C/D=24-61"/>
</dbReference>
<dbReference type="PDBsum" id="7T9Q"/>
<dbReference type="PDBsum" id="7T9R"/>
<dbReference type="SMR" id="A0A7G6KN55"/>
<dbReference type="KEGG" id="cpoo:109311509"/>
<dbReference type="OrthoDB" id="9835818at2759"/>
<dbReference type="Proteomes" id="UP000594220">
    <property type="component" value="Unplaced"/>
</dbReference>
<dbReference type="GO" id="GO:0005615">
    <property type="term" value="C:extracellular space"/>
    <property type="evidence" value="ECO:0000304"/>
    <property type="project" value="UniProtKB"/>
</dbReference>
<dbReference type="GO" id="GO:0031731">
    <property type="term" value="F:CCR6 chemokine receptor binding"/>
    <property type="evidence" value="ECO:0007669"/>
    <property type="project" value="TreeGrafter"/>
</dbReference>
<dbReference type="GO" id="GO:0042056">
    <property type="term" value="F:chemoattractant activity"/>
    <property type="evidence" value="ECO:0007669"/>
    <property type="project" value="TreeGrafter"/>
</dbReference>
<dbReference type="GO" id="GO:0042802">
    <property type="term" value="F:identical protein binding"/>
    <property type="evidence" value="ECO:0000314"/>
    <property type="project" value="UniProtKB"/>
</dbReference>
<dbReference type="GO" id="GO:0070300">
    <property type="term" value="F:phosphatidic acid binding"/>
    <property type="evidence" value="ECO:0000314"/>
    <property type="project" value="UniProtKB"/>
</dbReference>
<dbReference type="GO" id="GO:0060326">
    <property type="term" value="P:cell chemotaxis"/>
    <property type="evidence" value="ECO:0007669"/>
    <property type="project" value="TreeGrafter"/>
</dbReference>
<dbReference type="GO" id="GO:0042742">
    <property type="term" value="P:defense response to bacterium"/>
    <property type="evidence" value="ECO:0007669"/>
    <property type="project" value="UniProtKB-KW"/>
</dbReference>
<dbReference type="GO" id="GO:0050832">
    <property type="term" value="P:defense response to fungus"/>
    <property type="evidence" value="ECO:0007669"/>
    <property type="project" value="UniProtKB-KW"/>
</dbReference>
<dbReference type="GO" id="GO:0031640">
    <property type="term" value="P:killing of cells of another organism"/>
    <property type="evidence" value="ECO:0000314"/>
    <property type="project" value="UniProtKB"/>
</dbReference>
<dbReference type="CDD" id="cd21908">
    <property type="entry name" value="BDD_Gal13"/>
    <property type="match status" value="1"/>
</dbReference>
<dbReference type="InterPro" id="IPR001855">
    <property type="entry name" value="Defensin_beta-like"/>
</dbReference>
<dbReference type="PANTHER" id="PTHR20515">
    <property type="entry name" value="BETA-DEFENSIN"/>
    <property type="match status" value="1"/>
</dbReference>
<dbReference type="PANTHER" id="PTHR20515:SF0">
    <property type="entry name" value="BETA-DEFENSIN 103"/>
    <property type="match status" value="1"/>
</dbReference>
<dbReference type="Pfam" id="PF00711">
    <property type="entry name" value="Defensin_beta"/>
    <property type="match status" value="1"/>
</dbReference>
<dbReference type="SUPFAM" id="SSF57392">
    <property type="entry name" value="Defensin-like"/>
    <property type="match status" value="1"/>
</dbReference>
<gene>
    <name evidence="3" type="primary">BD13</name>
</gene>
<accession>A0A7G6KN55</accession>
<sequence length="61" mass="7095">MRLLYLLFAAVMLLFLQAVPANGSYYSTLQCRNNHGHCRRLCFHGEQWIGNCNGRHQHCCK</sequence>
<keyword id="KW-0002">3D-structure</keyword>
<keyword id="KW-0044">Antibiotic</keyword>
<keyword id="KW-0929">Antimicrobial</keyword>
<keyword id="KW-0211">Defensin</keyword>
<keyword id="KW-1015">Disulfide bond</keyword>
<keyword id="KW-0295">Fungicide</keyword>
<keyword id="KW-0446">Lipid-binding</keyword>
<keyword id="KW-1185">Reference proteome</keyword>
<keyword id="KW-0964">Secreted</keyword>
<keyword id="KW-0732">Signal</keyword>
<comment type="function">
    <text evidence="2">Exhibits antimicrobial activity against fungi (PubMed:36859344). Antimicrobial activity in a pH-dependent manner against the yeast C.albicans; activity is salt tolerant and retains antifungal activity in NaCl concentrations of 100mM (PubMed:36859344). Permeabilizes C.albicans cell membranes via targeting plasma membrane phospholipid phosphatidic acid (PubMed:36859344).</text>
</comment>
<comment type="subunit">
    <text evidence="2">Monomeric (PubMed:36859344). Forms multimeric, probably including tetrameric, complexes in the presence of phospholipid phosphatidic acid (PubMed:36859344).</text>
</comment>
<comment type="subcellular location">
    <subcellularLocation>
        <location evidence="6 7">Secreted</location>
    </subcellularLocation>
</comment>
<comment type="miscellaneous">
    <text evidence="2">Despite modest sequence identity to mammalian defensins, shows significant structural similarity to human BD-2/defensin beta 4A.</text>
</comment>
<comment type="similarity">
    <text evidence="5">Belongs to the beta-defensin family.</text>
</comment>
<organism evidence="8">
    <name type="scientific">Crocodylus porosus</name>
    <name type="common">Saltwater crocodile</name>
    <name type="synonym">Estuarine crocodile</name>
    <dbReference type="NCBI Taxonomy" id="8502"/>
    <lineage>
        <taxon>Eukaryota</taxon>
        <taxon>Metazoa</taxon>
        <taxon>Chordata</taxon>
        <taxon>Craniata</taxon>
        <taxon>Vertebrata</taxon>
        <taxon>Euteleostomi</taxon>
        <taxon>Archelosauria</taxon>
        <taxon>Archosauria</taxon>
        <taxon>Crocodylia</taxon>
        <taxon>Longirostres</taxon>
        <taxon>Crocodylidae</taxon>
        <taxon>Crocodylus</taxon>
    </lineage>
</organism>
<name>DFB13_CROPO</name>
<protein>
    <recommendedName>
        <fullName evidence="3">Beta-defensin 13</fullName>
        <shortName evidence="4">CpoBD13</shortName>
    </recommendedName>
</protein>
<proteinExistence type="evidence at protein level"/>
<reference evidence="8" key="1">
    <citation type="journal article" date="2021" name="Peptides">
        <title>Reptilian beta-defensins: Expanding the repertoire of known crocodylian peptides.</title>
        <authorList>
            <person name="Santana F.L."/>
            <person name="Estrada K."/>
            <person name="Ortiz E."/>
            <person name="Corzo G."/>
        </authorList>
    </citation>
    <scope>NUCLEOTIDE SEQUENCE [GENOMIC DNA]</scope>
    <scope>SUBCELLULAR LOCATION</scope>
</reference>
<reference evidence="9 10" key="2">
    <citation type="journal article" date="2023" name="Nat. Commun.">
        <title>Crocodile defensin (CpoBD13) antifungal activity via pH-dependent phospholipid targeting and membrane disruption.</title>
        <authorList>
            <person name="Williams S.A."/>
            <person name="Lay F.T."/>
            <person name="Bindra G.K."/>
            <person name="Banjara S."/>
            <person name="Poon I.K.H."/>
            <person name="Phan T.K."/>
            <person name="Kvansakul M."/>
            <person name="Hulett M.D."/>
        </authorList>
    </citation>
    <scope>X-RAY CRYSTALLOGRAPHY (1.45 ANGSTROMS) OF 24-61 IN COMPLEX WITH PHOSPHATIDIC ACID</scope>
    <scope>FUNCTION</scope>
    <scope>SUBUNIT</scope>
    <scope>SUBCELLULAR LOCATION</scope>
    <scope>MUTAGENESIS OF ARG-32; ARG-40; HIS-44; HIS-56 AND HIS-58</scope>
</reference>
<feature type="signal peptide" evidence="1">
    <location>
        <begin position="1"/>
        <end position="21"/>
    </location>
</feature>
<feature type="chain" id="PRO_5028882743" description="Beta-defensin 13" evidence="1">
    <location>
        <begin position="22"/>
        <end position="61"/>
    </location>
</feature>
<feature type="binding site" evidence="2 10">
    <location>
        <position position="24"/>
    </location>
    <ligand>
        <name>a 1,2-diacyl-sn-glycero-3-phosphate</name>
        <dbReference type="ChEBI" id="CHEBI:58608"/>
        <label>1</label>
        <note>ligand shared between three neighboring protomers</note>
    </ligand>
</feature>
<feature type="binding site" evidence="2 10">
    <location>
        <position position="40"/>
    </location>
    <ligand>
        <name>a 1,2-diacyl-sn-glycero-3-phosphate</name>
        <dbReference type="ChEBI" id="CHEBI:58608"/>
        <label>2</label>
    </ligand>
</feature>
<feature type="binding site" evidence="2 10">
    <location>
        <position position="44"/>
    </location>
    <ligand>
        <name>a 1,2-diacyl-sn-glycero-3-phosphate</name>
        <dbReference type="ChEBI" id="CHEBI:58608"/>
        <label>1</label>
        <note>ligand shared between three neighboring protomers</note>
    </ligand>
</feature>
<feature type="binding site" evidence="2 10">
    <location>
        <position position="51"/>
    </location>
    <ligand>
        <name>a 1,2-diacyl-sn-glycero-3-phosphate</name>
        <dbReference type="ChEBI" id="CHEBI:58608"/>
        <label>2</label>
    </ligand>
</feature>
<feature type="binding site" evidence="2 10">
    <location>
        <position position="53"/>
    </location>
    <ligand>
        <name>a 1,2-diacyl-sn-glycero-3-phosphate</name>
        <dbReference type="ChEBI" id="CHEBI:58608"/>
        <label>1</label>
        <note>ligand shared between three neighboring protomers</note>
    </ligand>
</feature>
<feature type="binding site" evidence="2 10">
    <location>
        <position position="54"/>
    </location>
    <ligand>
        <name>a 1,2-diacyl-sn-glycero-3-phosphate</name>
        <dbReference type="ChEBI" id="CHEBI:58608"/>
        <label>1</label>
        <note>ligand shared between three neighboring protomers</note>
    </ligand>
</feature>
<feature type="binding site" evidence="2 10">
    <location>
        <position position="58"/>
    </location>
    <ligand>
        <name>a 1,2-diacyl-sn-glycero-3-phosphate</name>
        <dbReference type="ChEBI" id="CHEBI:58608"/>
        <label>2</label>
    </ligand>
</feature>
<feature type="binding site" evidence="2 10">
    <location>
        <position position="61"/>
    </location>
    <ligand>
        <name>a 1,2-diacyl-sn-glycero-3-phosphate</name>
        <dbReference type="ChEBI" id="CHEBI:58608"/>
        <label>1</label>
        <note>ligand shared between three neighboring protomers</note>
    </ligand>
</feature>
<feature type="disulfide bond" evidence="2 9 10">
    <location>
        <begin position="31"/>
        <end position="59"/>
    </location>
</feature>
<feature type="disulfide bond" evidence="2 9 10">
    <location>
        <begin position="38"/>
        <end position="52"/>
    </location>
</feature>
<feature type="disulfide bond" evidence="2 9 10">
    <location>
        <begin position="42"/>
        <end position="60"/>
    </location>
</feature>
<feature type="mutagenesis site" description="Modest, but significant reduction in fungal growth inhibition activity. No effect on permeabilization of C.albicans cell membranes. Significant reduction in phosphatidic acid binding, but not at pH 5.5." evidence="2">
    <original>R</original>
    <variation>A</variation>
    <location>
        <position position="32"/>
    </location>
</feature>
<feature type="mutagenesis site" description="Significant reduction in fungal growth inhibition activity. Reduces ability to permeabilize C.albicans cell membranes. Significant reduction in phosphatidic acid binding at ph 7.4, but not at pH 5.5." evidence="2">
    <original>R</original>
    <variation>A</variation>
    <location>
        <position position="40"/>
    </location>
</feature>
<feature type="mutagenesis site" description="Significant reduction in fungal growth inhibition activity. Reduces ability to permeabilize C.albicans cell membranes. Significant reduction in phosphatidic acid binding at pH 5.5." evidence="2">
    <original>H</original>
    <variation>A</variation>
    <location>
        <position position="44"/>
    </location>
</feature>
<feature type="mutagenesis site" description="Modest, but significant reduction in fungal growth inhibition activity. No effect on permeabilization of C.albicans cell membranes." evidence="2">
    <original>H</original>
    <variation>A</variation>
    <location>
        <position position="56"/>
    </location>
</feature>
<feature type="mutagenesis site" description="No significant effect on fungal growth. No effect on permeabilization of C.albicans cell membranes." evidence="2">
    <original>H</original>
    <variation>A</variation>
    <location>
        <position position="58"/>
    </location>
</feature>
<feature type="helix" evidence="11">
    <location>
        <begin position="26"/>
        <end position="33"/>
    </location>
</feature>
<feature type="strand" evidence="11">
    <location>
        <begin position="37"/>
        <end position="41"/>
    </location>
</feature>
<feature type="strand" evidence="11">
    <location>
        <begin position="48"/>
        <end position="51"/>
    </location>
</feature>
<feature type="strand" evidence="11">
    <location>
        <begin position="58"/>
        <end position="60"/>
    </location>
</feature>